<dbReference type="EMBL" id="CP001277">
    <property type="protein sequence ID" value="ACQ68457.1"/>
    <property type="molecule type" value="Genomic_DNA"/>
</dbReference>
<dbReference type="RefSeq" id="WP_015874221.1">
    <property type="nucleotide sequence ID" value="NC_012751.1"/>
</dbReference>
<dbReference type="SMR" id="C4K7B4"/>
<dbReference type="STRING" id="572265.HDEF_1862"/>
<dbReference type="GeneID" id="66261447"/>
<dbReference type="KEGG" id="hde:HDEF_1862"/>
<dbReference type="eggNOG" id="COG0185">
    <property type="taxonomic scope" value="Bacteria"/>
</dbReference>
<dbReference type="HOGENOM" id="CLU_144911_0_1_6"/>
<dbReference type="Proteomes" id="UP000002334">
    <property type="component" value="Chromosome"/>
</dbReference>
<dbReference type="GO" id="GO:0005737">
    <property type="term" value="C:cytoplasm"/>
    <property type="evidence" value="ECO:0007669"/>
    <property type="project" value="UniProtKB-ARBA"/>
</dbReference>
<dbReference type="GO" id="GO:0015935">
    <property type="term" value="C:small ribosomal subunit"/>
    <property type="evidence" value="ECO:0007669"/>
    <property type="project" value="InterPro"/>
</dbReference>
<dbReference type="GO" id="GO:0019843">
    <property type="term" value="F:rRNA binding"/>
    <property type="evidence" value="ECO:0007669"/>
    <property type="project" value="UniProtKB-UniRule"/>
</dbReference>
<dbReference type="GO" id="GO:0003735">
    <property type="term" value="F:structural constituent of ribosome"/>
    <property type="evidence" value="ECO:0007669"/>
    <property type="project" value="InterPro"/>
</dbReference>
<dbReference type="GO" id="GO:0000028">
    <property type="term" value="P:ribosomal small subunit assembly"/>
    <property type="evidence" value="ECO:0007669"/>
    <property type="project" value="TreeGrafter"/>
</dbReference>
<dbReference type="GO" id="GO:0006412">
    <property type="term" value="P:translation"/>
    <property type="evidence" value="ECO:0007669"/>
    <property type="project" value="UniProtKB-UniRule"/>
</dbReference>
<dbReference type="FunFam" id="3.30.860.10:FF:000001">
    <property type="entry name" value="30S ribosomal protein S19"/>
    <property type="match status" value="1"/>
</dbReference>
<dbReference type="Gene3D" id="3.30.860.10">
    <property type="entry name" value="30s Ribosomal Protein S19, Chain A"/>
    <property type="match status" value="1"/>
</dbReference>
<dbReference type="HAMAP" id="MF_00531">
    <property type="entry name" value="Ribosomal_uS19"/>
    <property type="match status" value="1"/>
</dbReference>
<dbReference type="InterPro" id="IPR002222">
    <property type="entry name" value="Ribosomal_uS19"/>
</dbReference>
<dbReference type="InterPro" id="IPR005732">
    <property type="entry name" value="Ribosomal_uS19_bac-type"/>
</dbReference>
<dbReference type="InterPro" id="IPR020934">
    <property type="entry name" value="Ribosomal_uS19_CS"/>
</dbReference>
<dbReference type="InterPro" id="IPR023575">
    <property type="entry name" value="Ribosomal_uS19_SF"/>
</dbReference>
<dbReference type="NCBIfam" id="TIGR01050">
    <property type="entry name" value="rpsS_bact"/>
    <property type="match status" value="1"/>
</dbReference>
<dbReference type="PANTHER" id="PTHR11880">
    <property type="entry name" value="RIBOSOMAL PROTEIN S19P FAMILY MEMBER"/>
    <property type="match status" value="1"/>
</dbReference>
<dbReference type="PANTHER" id="PTHR11880:SF8">
    <property type="entry name" value="SMALL RIBOSOMAL SUBUNIT PROTEIN US19M"/>
    <property type="match status" value="1"/>
</dbReference>
<dbReference type="Pfam" id="PF00203">
    <property type="entry name" value="Ribosomal_S19"/>
    <property type="match status" value="1"/>
</dbReference>
<dbReference type="PIRSF" id="PIRSF002144">
    <property type="entry name" value="Ribosomal_S19"/>
    <property type="match status" value="1"/>
</dbReference>
<dbReference type="PRINTS" id="PR00975">
    <property type="entry name" value="RIBOSOMALS19"/>
</dbReference>
<dbReference type="SUPFAM" id="SSF54570">
    <property type="entry name" value="Ribosomal protein S19"/>
    <property type="match status" value="1"/>
</dbReference>
<dbReference type="PROSITE" id="PS00323">
    <property type="entry name" value="RIBOSOMAL_S19"/>
    <property type="match status" value="1"/>
</dbReference>
<reference key="1">
    <citation type="journal article" date="2009" name="Proc. Natl. Acad. Sci. U.S.A.">
        <title>Hamiltonella defensa, genome evolution of protective bacterial endosymbiont from pathogenic ancestors.</title>
        <authorList>
            <person name="Degnan P.H."/>
            <person name="Yu Y."/>
            <person name="Sisneros N."/>
            <person name="Wing R.A."/>
            <person name="Moran N.A."/>
        </authorList>
    </citation>
    <scope>NUCLEOTIDE SEQUENCE [LARGE SCALE GENOMIC DNA]</scope>
    <source>
        <strain>5AT</strain>
    </source>
</reference>
<comment type="function">
    <text evidence="1">Protein S19 forms a complex with S13 that binds strongly to the 16S ribosomal RNA.</text>
</comment>
<comment type="similarity">
    <text evidence="1">Belongs to the universal ribosomal protein uS19 family.</text>
</comment>
<organism>
    <name type="scientific">Hamiltonella defensa subsp. Acyrthosiphon pisum (strain 5AT)</name>
    <dbReference type="NCBI Taxonomy" id="572265"/>
    <lineage>
        <taxon>Bacteria</taxon>
        <taxon>Pseudomonadati</taxon>
        <taxon>Pseudomonadota</taxon>
        <taxon>Gammaproteobacteria</taxon>
        <taxon>Enterobacterales</taxon>
        <taxon>Enterobacteriaceae</taxon>
        <taxon>aphid secondary symbionts</taxon>
        <taxon>Candidatus Hamiltonella</taxon>
    </lineage>
</organism>
<feature type="chain" id="PRO_1000211810" description="Small ribosomal subunit protein uS19">
    <location>
        <begin position="1"/>
        <end position="94"/>
    </location>
</feature>
<gene>
    <name evidence="1" type="primary">rpsS</name>
    <name type="ordered locus">HDEF_1862</name>
</gene>
<proteinExistence type="inferred from homology"/>
<evidence type="ECO:0000255" key="1">
    <source>
        <dbReference type="HAMAP-Rule" id="MF_00531"/>
    </source>
</evidence>
<evidence type="ECO:0000305" key="2"/>
<sequence>MPRSLKKSFFVDRHLLKKVEKSAENNKDKKPIRTWSRRSTIFPEMIGLTIAIHNGRLHVPVFISDEMVSHKLGEFAPTRTYRGHVAADRKAKKR</sequence>
<protein>
    <recommendedName>
        <fullName evidence="1">Small ribosomal subunit protein uS19</fullName>
    </recommendedName>
    <alternativeName>
        <fullName evidence="2">30S ribosomal protein S19</fullName>
    </alternativeName>
</protein>
<name>RS19_HAMD5</name>
<keyword id="KW-0687">Ribonucleoprotein</keyword>
<keyword id="KW-0689">Ribosomal protein</keyword>
<keyword id="KW-0694">RNA-binding</keyword>
<keyword id="KW-0699">rRNA-binding</keyword>
<accession>C4K7B4</accession>